<name>FPG_PSEAB</name>
<keyword id="KW-0227">DNA damage</keyword>
<keyword id="KW-0234">DNA repair</keyword>
<keyword id="KW-0238">DNA-binding</keyword>
<keyword id="KW-0326">Glycosidase</keyword>
<keyword id="KW-0378">Hydrolase</keyword>
<keyword id="KW-0456">Lyase</keyword>
<keyword id="KW-0479">Metal-binding</keyword>
<keyword id="KW-0511">Multifunctional enzyme</keyword>
<keyword id="KW-0862">Zinc</keyword>
<keyword id="KW-0863">Zinc-finger</keyword>
<proteinExistence type="inferred from homology"/>
<protein>
    <recommendedName>
        <fullName evidence="2">Formamidopyrimidine-DNA glycosylase</fullName>
        <shortName evidence="2">Fapy-DNA glycosylase</shortName>
        <ecNumber evidence="2">3.2.2.23</ecNumber>
    </recommendedName>
    <alternativeName>
        <fullName evidence="2">DNA-(apurinic or apyrimidinic site) lyase MutM</fullName>
        <shortName evidence="2">AP lyase MutM</shortName>
        <ecNumber evidence="2">4.2.99.18</ecNumber>
    </alternativeName>
</protein>
<dbReference type="EC" id="3.2.2.23" evidence="2"/>
<dbReference type="EC" id="4.2.99.18" evidence="2"/>
<dbReference type="EMBL" id="CP000438">
    <property type="protein sequence ID" value="ABJ15321.1"/>
    <property type="molecule type" value="Genomic_DNA"/>
</dbReference>
<dbReference type="RefSeq" id="WP_003102876.1">
    <property type="nucleotide sequence ID" value="NZ_CP034244.1"/>
</dbReference>
<dbReference type="SMR" id="Q02U58"/>
<dbReference type="KEGG" id="pau:PA14_04670"/>
<dbReference type="PseudoCAP" id="PA14_04670"/>
<dbReference type="HOGENOM" id="CLU_038423_1_1_6"/>
<dbReference type="BioCyc" id="PAER208963:G1G74-389-MONOMER"/>
<dbReference type="Proteomes" id="UP000000653">
    <property type="component" value="Chromosome"/>
</dbReference>
<dbReference type="GO" id="GO:0034039">
    <property type="term" value="F:8-oxo-7,8-dihydroguanine DNA N-glycosylase activity"/>
    <property type="evidence" value="ECO:0007669"/>
    <property type="project" value="TreeGrafter"/>
</dbReference>
<dbReference type="GO" id="GO:0140078">
    <property type="term" value="F:class I DNA-(apurinic or apyrimidinic site) endonuclease activity"/>
    <property type="evidence" value="ECO:0007669"/>
    <property type="project" value="UniProtKB-EC"/>
</dbReference>
<dbReference type="GO" id="GO:0003684">
    <property type="term" value="F:damaged DNA binding"/>
    <property type="evidence" value="ECO:0007669"/>
    <property type="project" value="InterPro"/>
</dbReference>
<dbReference type="GO" id="GO:0008270">
    <property type="term" value="F:zinc ion binding"/>
    <property type="evidence" value="ECO:0007669"/>
    <property type="project" value="UniProtKB-UniRule"/>
</dbReference>
<dbReference type="GO" id="GO:0006284">
    <property type="term" value="P:base-excision repair"/>
    <property type="evidence" value="ECO:0007669"/>
    <property type="project" value="InterPro"/>
</dbReference>
<dbReference type="CDD" id="cd08966">
    <property type="entry name" value="EcFpg-like_N"/>
    <property type="match status" value="1"/>
</dbReference>
<dbReference type="FunFam" id="1.10.8.50:FF:000003">
    <property type="entry name" value="Formamidopyrimidine-DNA glycosylase"/>
    <property type="match status" value="1"/>
</dbReference>
<dbReference type="FunFam" id="3.20.190.10:FF:000001">
    <property type="entry name" value="Formamidopyrimidine-DNA glycosylase"/>
    <property type="match status" value="1"/>
</dbReference>
<dbReference type="Gene3D" id="1.10.8.50">
    <property type="match status" value="1"/>
</dbReference>
<dbReference type="Gene3D" id="3.20.190.10">
    <property type="entry name" value="MutM-like, N-terminal"/>
    <property type="match status" value="1"/>
</dbReference>
<dbReference type="HAMAP" id="MF_00103">
    <property type="entry name" value="Fapy_DNA_glycosyl"/>
    <property type="match status" value="1"/>
</dbReference>
<dbReference type="InterPro" id="IPR015886">
    <property type="entry name" value="DNA_glyclase/AP_lyase_DNA-bd"/>
</dbReference>
<dbReference type="InterPro" id="IPR015887">
    <property type="entry name" value="DNA_glyclase_Znf_dom_DNA_BS"/>
</dbReference>
<dbReference type="InterPro" id="IPR020629">
    <property type="entry name" value="Formamido-pyr_DNA_Glyclase"/>
</dbReference>
<dbReference type="InterPro" id="IPR012319">
    <property type="entry name" value="FPG_cat"/>
</dbReference>
<dbReference type="InterPro" id="IPR035937">
    <property type="entry name" value="MutM-like_N-ter"/>
</dbReference>
<dbReference type="InterPro" id="IPR010979">
    <property type="entry name" value="Ribosomal_uS13-like_H2TH"/>
</dbReference>
<dbReference type="InterPro" id="IPR000214">
    <property type="entry name" value="Znf_DNA_glyclase/AP_lyase"/>
</dbReference>
<dbReference type="InterPro" id="IPR010663">
    <property type="entry name" value="Znf_FPG/IleRS"/>
</dbReference>
<dbReference type="NCBIfam" id="TIGR00577">
    <property type="entry name" value="fpg"/>
    <property type="match status" value="1"/>
</dbReference>
<dbReference type="NCBIfam" id="NF002211">
    <property type="entry name" value="PRK01103.1"/>
    <property type="match status" value="1"/>
</dbReference>
<dbReference type="PANTHER" id="PTHR22993">
    <property type="entry name" value="FORMAMIDOPYRIMIDINE-DNA GLYCOSYLASE"/>
    <property type="match status" value="1"/>
</dbReference>
<dbReference type="PANTHER" id="PTHR22993:SF9">
    <property type="entry name" value="FORMAMIDOPYRIMIDINE-DNA GLYCOSYLASE"/>
    <property type="match status" value="1"/>
</dbReference>
<dbReference type="Pfam" id="PF01149">
    <property type="entry name" value="Fapy_DNA_glyco"/>
    <property type="match status" value="1"/>
</dbReference>
<dbReference type="Pfam" id="PF06831">
    <property type="entry name" value="H2TH"/>
    <property type="match status" value="1"/>
</dbReference>
<dbReference type="Pfam" id="PF06827">
    <property type="entry name" value="zf-FPG_IleRS"/>
    <property type="match status" value="1"/>
</dbReference>
<dbReference type="SMART" id="SM00898">
    <property type="entry name" value="Fapy_DNA_glyco"/>
    <property type="match status" value="1"/>
</dbReference>
<dbReference type="SMART" id="SM01232">
    <property type="entry name" value="H2TH"/>
    <property type="match status" value="1"/>
</dbReference>
<dbReference type="SUPFAM" id="SSF57716">
    <property type="entry name" value="Glucocorticoid receptor-like (DNA-binding domain)"/>
    <property type="match status" value="1"/>
</dbReference>
<dbReference type="SUPFAM" id="SSF81624">
    <property type="entry name" value="N-terminal domain of MutM-like DNA repair proteins"/>
    <property type="match status" value="1"/>
</dbReference>
<dbReference type="SUPFAM" id="SSF46946">
    <property type="entry name" value="S13-like H2TH domain"/>
    <property type="match status" value="1"/>
</dbReference>
<dbReference type="PROSITE" id="PS51068">
    <property type="entry name" value="FPG_CAT"/>
    <property type="match status" value="1"/>
</dbReference>
<dbReference type="PROSITE" id="PS01242">
    <property type="entry name" value="ZF_FPG_1"/>
    <property type="match status" value="1"/>
</dbReference>
<dbReference type="PROSITE" id="PS51066">
    <property type="entry name" value="ZF_FPG_2"/>
    <property type="match status" value="1"/>
</dbReference>
<organism>
    <name type="scientific">Pseudomonas aeruginosa (strain UCBPP-PA14)</name>
    <dbReference type="NCBI Taxonomy" id="208963"/>
    <lineage>
        <taxon>Bacteria</taxon>
        <taxon>Pseudomonadati</taxon>
        <taxon>Pseudomonadota</taxon>
        <taxon>Gammaproteobacteria</taxon>
        <taxon>Pseudomonadales</taxon>
        <taxon>Pseudomonadaceae</taxon>
        <taxon>Pseudomonas</taxon>
    </lineage>
</organism>
<feature type="initiator methionine" description="Removed" evidence="1">
    <location>
        <position position="1"/>
    </location>
</feature>
<feature type="chain" id="PRO_1000008742" description="Formamidopyrimidine-DNA glycosylase">
    <location>
        <begin position="2"/>
        <end position="270"/>
    </location>
</feature>
<feature type="zinc finger region" description="FPG-type" evidence="2">
    <location>
        <begin position="236"/>
        <end position="270"/>
    </location>
</feature>
<feature type="active site" description="Schiff-base intermediate with DNA" evidence="2">
    <location>
        <position position="2"/>
    </location>
</feature>
<feature type="active site" description="Proton donor" evidence="2">
    <location>
        <position position="3"/>
    </location>
</feature>
<feature type="active site" description="Proton donor; for beta-elimination activity" evidence="2">
    <location>
        <position position="58"/>
    </location>
</feature>
<feature type="active site" description="Proton donor; for delta-elimination activity" evidence="2">
    <location>
        <position position="260"/>
    </location>
</feature>
<feature type="binding site" evidence="2">
    <location>
        <position position="91"/>
    </location>
    <ligand>
        <name>DNA</name>
        <dbReference type="ChEBI" id="CHEBI:16991"/>
    </ligand>
</feature>
<feature type="binding site" evidence="2">
    <location>
        <position position="110"/>
    </location>
    <ligand>
        <name>DNA</name>
        <dbReference type="ChEBI" id="CHEBI:16991"/>
    </ligand>
</feature>
<feature type="binding site" evidence="2">
    <location>
        <position position="151"/>
    </location>
    <ligand>
        <name>DNA</name>
        <dbReference type="ChEBI" id="CHEBI:16991"/>
    </ligand>
</feature>
<comment type="function">
    <text evidence="2">Involved in base excision repair of DNA damaged by oxidation or by mutagenic agents. Acts as a DNA glycosylase that recognizes and removes damaged bases. Has a preference for oxidized purines, such as 7,8-dihydro-8-oxoguanine (8-oxoG). Has AP (apurinic/apyrimidinic) lyase activity and introduces nicks in the DNA strand. Cleaves the DNA backbone by beta-delta elimination to generate a single-strand break at the site of the removed base with both 3'- and 5'-phosphates.</text>
</comment>
<comment type="catalytic activity">
    <reaction evidence="2">
        <text>Hydrolysis of DNA containing ring-opened 7-methylguanine residues, releasing 2,6-diamino-4-hydroxy-5-(N-methyl)formamidopyrimidine.</text>
        <dbReference type="EC" id="3.2.2.23"/>
    </reaction>
</comment>
<comment type="catalytic activity">
    <reaction evidence="2">
        <text>2'-deoxyribonucleotide-(2'-deoxyribose 5'-phosphate)-2'-deoxyribonucleotide-DNA = a 3'-end 2'-deoxyribonucleotide-(2,3-dehydro-2,3-deoxyribose 5'-phosphate)-DNA + a 5'-end 5'-phospho-2'-deoxyribonucleoside-DNA + H(+)</text>
        <dbReference type="Rhea" id="RHEA:66592"/>
        <dbReference type="Rhea" id="RHEA-COMP:13180"/>
        <dbReference type="Rhea" id="RHEA-COMP:16897"/>
        <dbReference type="Rhea" id="RHEA-COMP:17067"/>
        <dbReference type="ChEBI" id="CHEBI:15378"/>
        <dbReference type="ChEBI" id="CHEBI:136412"/>
        <dbReference type="ChEBI" id="CHEBI:157695"/>
        <dbReference type="ChEBI" id="CHEBI:167181"/>
        <dbReference type="EC" id="4.2.99.18"/>
    </reaction>
</comment>
<comment type="cofactor">
    <cofactor evidence="2">
        <name>Zn(2+)</name>
        <dbReference type="ChEBI" id="CHEBI:29105"/>
    </cofactor>
    <text evidence="2">Binds 1 zinc ion per subunit.</text>
</comment>
<comment type="subunit">
    <text evidence="2">Monomer.</text>
</comment>
<comment type="similarity">
    <text evidence="2">Belongs to the FPG family.</text>
</comment>
<gene>
    <name evidence="2" type="primary">mutM</name>
    <name evidence="2" type="synonym">fpg</name>
    <name type="ordered locus">PA14_04670</name>
</gene>
<sequence>MPELPEVETTRRGIAPYLEGQRVERVIVRERRLRWPIPEDLDVRLSGQRIVSVERRAKYLLLGAEAGTLISHLGMSGSLRLVESGTPASRHEHVDIELASGMALRYTDPRRFGAMLWSLAPLEHELLRNLGPEPLTDAFAGQRLFELSRGRSMAVKPFIMDNAVVVGVGNIYASEALFAAGIDPRKPAGSISKARYLRLAEEIKRILAIAIERGGTTLRDFVGGDGQPGYFQQELFVYGRGGEFCKVCGSTLREIRLGQRASVYCPRCQR</sequence>
<reference key="1">
    <citation type="journal article" date="2006" name="Genome Biol.">
        <title>Genomic analysis reveals that Pseudomonas aeruginosa virulence is combinatorial.</title>
        <authorList>
            <person name="Lee D.G."/>
            <person name="Urbach J.M."/>
            <person name="Wu G."/>
            <person name="Liberati N.T."/>
            <person name="Feinbaum R.L."/>
            <person name="Miyata S."/>
            <person name="Diggins L.T."/>
            <person name="He J."/>
            <person name="Saucier M."/>
            <person name="Deziel E."/>
            <person name="Friedman L."/>
            <person name="Li L."/>
            <person name="Grills G."/>
            <person name="Montgomery K."/>
            <person name="Kucherlapati R."/>
            <person name="Rahme L.G."/>
            <person name="Ausubel F.M."/>
        </authorList>
    </citation>
    <scope>NUCLEOTIDE SEQUENCE [LARGE SCALE GENOMIC DNA]</scope>
    <source>
        <strain>UCBPP-PA14</strain>
    </source>
</reference>
<accession>Q02U58</accession>
<evidence type="ECO:0000250" key="1"/>
<evidence type="ECO:0000255" key="2">
    <source>
        <dbReference type="HAMAP-Rule" id="MF_00103"/>
    </source>
</evidence>